<name>BCCP_ECOLI</name>
<gene>
    <name type="primary">accB</name>
    <name type="synonym">fabE</name>
    <name type="ordered locus">b3255</name>
    <name type="ordered locus">JW3223</name>
</gene>
<organism>
    <name type="scientific">Escherichia coli (strain K12)</name>
    <dbReference type="NCBI Taxonomy" id="83333"/>
    <lineage>
        <taxon>Bacteria</taxon>
        <taxon>Pseudomonadati</taxon>
        <taxon>Pseudomonadota</taxon>
        <taxon>Gammaproteobacteria</taxon>
        <taxon>Enterobacterales</taxon>
        <taxon>Enterobacteriaceae</taxon>
        <taxon>Escherichia</taxon>
    </lineage>
</organism>
<comment type="function">
    <text evidence="3">This protein is a component of the acetyl coenzyme A carboxylase complex; first, biotin carboxylase catalyzes the carboxylation of the carrier protein and then the transcarboxylase transfers the carboxyl group to form malonyl-CoA.</text>
</comment>
<comment type="pathway">
    <text>Lipid metabolism; fatty acid biosynthesis.</text>
</comment>
<comment type="subunit">
    <text>Homodimer.</text>
</comment>
<comment type="interaction">
    <interactant intactId="EBI-542320">
        <id>P0ABD8</id>
    </interactant>
    <interactant intactId="EBI-542308">
        <id>P24182</id>
        <label>accC</label>
    </interactant>
    <organismsDiffer>false</organismsDiffer>
    <experiments>10</experiments>
</comment>
<protein>
    <recommendedName>
        <fullName evidence="4">Biotin carboxyl carrier protein of acetyl-CoA carboxylase</fullName>
        <shortName evidence="4">BCCP</shortName>
    </recommendedName>
</protein>
<dbReference type="EMBL" id="X14825">
    <property type="protein sequence ID" value="CAA32933.1"/>
    <property type="molecule type" value="Genomic_DNA"/>
</dbReference>
<dbReference type="EMBL" id="M80458">
    <property type="protein sequence ID" value="AAA23408.1"/>
    <property type="molecule type" value="Genomic_DNA"/>
</dbReference>
<dbReference type="EMBL" id="M32214">
    <property type="protein sequence ID" value="AAA23744.1"/>
    <property type="molecule type" value="Genomic_DNA"/>
</dbReference>
<dbReference type="EMBL" id="M83198">
    <property type="protein sequence ID" value="AAA23745.1"/>
    <property type="molecule type" value="Genomic_DNA"/>
</dbReference>
<dbReference type="EMBL" id="U18997">
    <property type="protein sequence ID" value="AAA58058.1"/>
    <property type="molecule type" value="Genomic_DNA"/>
</dbReference>
<dbReference type="EMBL" id="U00096">
    <property type="protein sequence ID" value="AAC76287.1"/>
    <property type="molecule type" value="Genomic_DNA"/>
</dbReference>
<dbReference type="EMBL" id="AP009048">
    <property type="protein sequence ID" value="BAE77296.1"/>
    <property type="molecule type" value="Genomic_DNA"/>
</dbReference>
<dbReference type="EMBL" id="S52932">
    <property type="protein sequence ID" value="AAB24892.1"/>
    <property type="molecule type" value="mRNA"/>
</dbReference>
<dbReference type="EMBL" id="M79446">
    <property type="status" value="NOT_ANNOTATED_CDS"/>
    <property type="molecule type" value="Genomic_DNA"/>
</dbReference>
<dbReference type="PIR" id="A93687">
    <property type="entry name" value="BKEC9"/>
</dbReference>
<dbReference type="RefSeq" id="NP_417721.1">
    <property type="nucleotide sequence ID" value="NC_000913.3"/>
</dbReference>
<dbReference type="RefSeq" id="WP_000354622.1">
    <property type="nucleotide sequence ID" value="NZ_STEB01000012.1"/>
</dbReference>
<dbReference type="PDB" id="1A6X">
    <property type="method" value="NMR"/>
    <property type="chains" value="A=70-156"/>
</dbReference>
<dbReference type="PDB" id="1BDO">
    <property type="method" value="X-ray"/>
    <property type="resolution" value="1.80 A"/>
    <property type="chains" value="A=77-156"/>
</dbReference>
<dbReference type="PDB" id="2BDO">
    <property type="method" value="NMR"/>
    <property type="chains" value="A=77-156"/>
</dbReference>
<dbReference type="PDB" id="3BDO">
    <property type="method" value="NMR"/>
    <property type="chains" value="A=75-156"/>
</dbReference>
<dbReference type="PDB" id="4HR7">
    <property type="method" value="X-ray"/>
    <property type="resolution" value="2.50 A"/>
    <property type="chains" value="B/D/G/I=1-156"/>
</dbReference>
<dbReference type="PDB" id="8UZ2">
    <property type="method" value="EM"/>
    <property type="resolution" value="3.18 A"/>
    <property type="chains" value="B/F=80-156"/>
</dbReference>
<dbReference type="PDBsum" id="1A6X"/>
<dbReference type="PDBsum" id="1BDO"/>
<dbReference type="PDBsum" id="2BDO"/>
<dbReference type="PDBsum" id="3BDO"/>
<dbReference type="PDBsum" id="4HR7"/>
<dbReference type="PDBsum" id="8UZ2"/>
<dbReference type="BMRB" id="P0ABD8"/>
<dbReference type="EMDB" id="EMD-42831"/>
<dbReference type="SMR" id="P0ABD8"/>
<dbReference type="BioGRID" id="4259533">
    <property type="interactions" value="414"/>
</dbReference>
<dbReference type="BioGRID" id="852070">
    <property type="interactions" value="1"/>
</dbReference>
<dbReference type="ComplexPortal" id="CPX-3206">
    <property type="entry name" value="Acetyl-CoA carboxylase complex"/>
</dbReference>
<dbReference type="DIP" id="DIP-48007N"/>
<dbReference type="FunCoup" id="P0ABD8">
    <property type="interactions" value="679"/>
</dbReference>
<dbReference type="IntAct" id="P0ABD8">
    <property type="interactions" value="12"/>
</dbReference>
<dbReference type="STRING" id="511145.b3255"/>
<dbReference type="jPOST" id="P0ABD8"/>
<dbReference type="PaxDb" id="511145-b3255"/>
<dbReference type="EnsemblBacteria" id="AAC76287">
    <property type="protein sequence ID" value="AAC76287"/>
    <property type="gene ID" value="b3255"/>
</dbReference>
<dbReference type="GeneID" id="93778732"/>
<dbReference type="GeneID" id="947758"/>
<dbReference type="KEGG" id="ecj:JW3223"/>
<dbReference type="KEGG" id="eco:b3255"/>
<dbReference type="KEGG" id="ecoc:C3026_17710"/>
<dbReference type="PATRIC" id="fig|1411691.4.peg.3473"/>
<dbReference type="EchoBASE" id="EB0271"/>
<dbReference type="eggNOG" id="COG0511">
    <property type="taxonomic scope" value="Bacteria"/>
</dbReference>
<dbReference type="HOGENOM" id="CLU_016733_3_1_6"/>
<dbReference type="InParanoid" id="P0ABD8"/>
<dbReference type="OMA" id="EVEYPCK"/>
<dbReference type="OrthoDB" id="9811735at2"/>
<dbReference type="PhylomeDB" id="P0ABD8"/>
<dbReference type="BioCyc" id="EcoCyc:BCCP-MONOMER"/>
<dbReference type="BioCyc" id="MetaCyc:BCCP-MONOMER"/>
<dbReference type="BRENDA" id="6.4.1.2">
    <property type="organism ID" value="2026"/>
</dbReference>
<dbReference type="SABIO-RK" id="P0ABD8"/>
<dbReference type="UniPathway" id="UPA00094"/>
<dbReference type="EvolutionaryTrace" id="P0ABD8"/>
<dbReference type="PRO" id="PR:P0ABD8"/>
<dbReference type="Proteomes" id="UP000000625">
    <property type="component" value="Chromosome"/>
</dbReference>
<dbReference type="GO" id="GO:0009317">
    <property type="term" value="C:acetyl-CoA carboxylase complex"/>
    <property type="evidence" value="ECO:0000314"/>
    <property type="project" value="ComplexPortal"/>
</dbReference>
<dbReference type="GO" id="GO:0005737">
    <property type="term" value="C:cytoplasm"/>
    <property type="evidence" value="ECO:0000305"/>
    <property type="project" value="EcoliWiki"/>
</dbReference>
<dbReference type="GO" id="GO:0005829">
    <property type="term" value="C:cytosol"/>
    <property type="evidence" value="ECO:0000314"/>
    <property type="project" value="EcoCyc"/>
</dbReference>
<dbReference type="GO" id="GO:0003989">
    <property type="term" value="F:acetyl-CoA carboxylase activity"/>
    <property type="evidence" value="ECO:0000315"/>
    <property type="project" value="EcoliWiki"/>
</dbReference>
<dbReference type="GO" id="GO:0060090">
    <property type="term" value="F:molecular adaptor activity"/>
    <property type="evidence" value="ECO:0000269"/>
    <property type="project" value="DisProt"/>
</dbReference>
<dbReference type="GO" id="GO:0006633">
    <property type="term" value="P:fatty acid biosynthetic process"/>
    <property type="evidence" value="ECO:0000314"/>
    <property type="project" value="ComplexPortal"/>
</dbReference>
<dbReference type="GO" id="GO:2001295">
    <property type="term" value="P:malonyl-CoA biosynthetic process"/>
    <property type="evidence" value="ECO:0000314"/>
    <property type="project" value="ComplexPortal"/>
</dbReference>
<dbReference type="CDD" id="cd06850">
    <property type="entry name" value="biotinyl_domain"/>
    <property type="match status" value="1"/>
</dbReference>
<dbReference type="DisProt" id="DP00970"/>
<dbReference type="FunFam" id="2.40.50.100:FF:000003">
    <property type="entry name" value="Acetyl-CoA carboxylase biotin carboxyl carrier protein"/>
    <property type="match status" value="1"/>
</dbReference>
<dbReference type="Gene3D" id="2.40.50.100">
    <property type="match status" value="1"/>
</dbReference>
<dbReference type="InterPro" id="IPR001249">
    <property type="entry name" value="AcCoA_biotinCC"/>
</dbReference>
<dbReference type="InterPro" id="IPR001882">
    <property type="entry name" value="Biotin_BS"/>
</dbReference>
<dbReference type="InterPro" id="IPR050709">
    <property type="entry name" value="Biotin_Carboxyl_Carrier/Decarb"/>
</dbReference>
<dbReference type="InterPro" id="IPR000089">
    <property type="entry name" value="Biotin_lipoyl"/>
</dbReference>
<dbReference type="InterPro" id="IPR011053">
    <property type="entry name" value="Single_hybrid_motif"/>
</dbReference>
<dbReference type="NCBIfam" id="TIGR00531">
    <property type="entry name" value="BCCP"/>
    <property type="match status" value="1"/>
</dbReference>
<dbReference type="PANTHER" id="PTHR45266">
    <property type="entry name" value="OXALOACETATE DECARBOXYLASE ALPHA CHAIN"/>
    <property type="match status" value="1"/>
</dbReference>
<dbReference type="PANTHER" id="PTHR45266:SF3">
    <property type="entry name" value="OXALOACETATE DECARBOXYLASE ALPHA CHAIN"/>
    <property type="match status" value="1"/>
</dbReference>
<dbReference type="Pfam" id="PF00364">
    <property type="entry name" value="Biotin_lipoyl"/>
    <property type="match status" value="1"/>
</dbReference>
<dbReference type="PRINTS" id="PR01071">
    <property type="entry name" value="ACOABIOTINCC"/>
</dbReference>
<dbReference type="SUPFAM" id="SSF51230">
    <property type="entry name" value="Single hybrid motif"/>
    <property type="match status" value="1"/>
</dbReference>
<dbReference type="PROSITE" id="PS00188">
    <property type="entry name" value="BIOTIN"/>
    <property type="match status" value="1"/>
</dbReference>
<dbReference type="PROSITE" id="PS50968">
    <property type="entry name" value="BIOTINYL_LIPOYL"/>
    <property type="match status" value="1"/>
</dbReference>
<reference key="1">
    <citation type="journal article" date="1989" name="Nucleic Acids Res.">
        <title>Nucleotide sequence of the fabE gene and flanking regions containing a bent DNA sequence of Escherichia coli.</title>
        <authorList>
            <person name="Muramatsu S."/>
            <person name="Mizuno T."/>
        </authorList>
    </citation>
    <scope>NUCLEOTIDE SEQUENCE [GENOMIC DNA]</scope>
    <source>
        <strain>K12</strain>
    </source>
</reference>
<reference key="2">
    <citation type="journal article" date="1989" name="DNA">
        <title>A rapid procedure for cloning genes from lambda libraries by complementation of E. coli defective mutants: application to the fabE region of the E. coli chromosome.</title>
        <authorList>
            <person name="Alix J.-H."/>
        </authorList>
    </citation>
    <scope>NUCLEOTIDE SEQUENCE [GENOMIC DNA]</scope>
</reference>
<reference key="3">
    <citation type="journal article" date="1992" name="J. Biol. Chem.">
        <title>The gene encoding the biotin carboxylase subunit of Escherichia coli acetyl-CoA carboxylase.</title>
        <authorList>
            <person name="Li S.-J."/>
            <person name="Cronan J.E. Jr."/>
        </authorList>
    </citation>
    <scope>NUCLEOTIDE SEQUENCE [GENOMIC DNA]</scope>
    <source>
        <strain>K12</strain>
    </source>
</reference>
<reference key="4">
    <citation type="submission" date="1992-07" db="EMBL/GenBank/DDBJ databases">
        <title>Cloning and characterization of the E. coli fabEG operon encoding subunits of acetyl-CoA carboxylase.</title>
        <authorList>
            <person name="Best E.A."/>
            <person name="Knauf V.C."/>
        </authorList>
    </citation>
    <scope>NUCLEOTIDE SEQUENCE [GENOMIC DNA]</scope>
    <source>
        <strain>K12</strain>
    </source>
</reference>
<reference key="5">
    <citation type="journal article" date="1997" name="Science">
        <title>The complete genome sequence of Escherichia coli K-12.</title>
        <authorList>
            <person name="Blattner F.R."/>
            <person name="Plunkett G. III"/>
            <person name="Bloch C.A."/>
            <person name="Perna N.T."/>
            <person name="Burland V."/>
            <person name="Riley M."/>
            <person name="Collado-Vides J."/>
            <person name="Glasner J.D."/>
            <person name="Rode C.K."/>
            <person name="Mayhew G.F."/>
            <person name="Gregor J."/>
            <person name="Davis N.W."/>
            <person name="Kirkpatrick H.A."/>
            <person name="Goeden M.A."/>
            <person name="Rose D.J."/>
            <person name="Mau B."/>
            <person name="Shao Y."/>
        </authorList>
    </citation>
    <scope>NUCLEOTIDE SEQUENCE [LARGE SCALE GENOMIC DNA]</scope>
    <source>
        <strain>K12 / MG1655 / ATCC 47076</strain>
    </source>
</reference>
<reference key="6">
    <citation type="journal article" date="2006" name="Mol. Syst. Biol.">
        <title>Highly accurate genome sequences of Escherichia coli K-12 strains MG1655 and W3110.</title>
        <authorList>
            <person name="Hayashi K."/>
            <person name="Morooka N."/>
            <person name="Yamamoto Y."/>
            <person name="Fujita K."/>
            <person name="Isono K."/>
            <person name="Choi S."/>
            <person name="Ohtsubo E."/>
            <person name="Baba T."/>
            <person name="Wanner B.L."/>
            <person name="Mori H."/>
            <person name="Horiuchi T."/>
        </authorList>
    </citation>
    <scope>NUCLEOTIDE SEQUENCE [LARGE SCALE GENOMIC DNA]</scope>
    <source>
        <strain>K12 / W3110 / ATCC 27325 / DSM 5911</strain>
    </source>
</reference>
<reference key="7">
    <citation type="journal article" date="1993" name="J. Bacteriol.">
        <title>Growth rate regulation of Escherichia coli acetyl coenzyme A carboxylase, which catalyzes the first committed step of lipid biosynthesis.</title>
        <authorList>
            <person name="Li S.-J."/>
            <person name="Cronan J.E. Jr."/>
        </authorList>
    </citation>
    <scope>NUCLEOTIDE SEQUENCE [GENOMIC DNA] OF 1-25</scope>
</reference>
<reference key="8">
    <citation type="journal article" date="1998" name="J. Mol. Biol.">
        <title>Protein identification with N and C-terminal sequence tags in proteome projects.</title>
        <authorList>
            <person name="Wilkins M.R."/>
            <person name="Gasteiger E."/>
            <person name="Tonella L."/>
            <person name="Ou K."/>
            <person name="Tyler M."/>
            <person name="Sanchez J.-C."/>
            <person name="Gooley A.A."/>
            <person name="Walsh B.J."/>
            <person name="Bairoch A."/>
            <person name="Appel R.D."/>
            <person name="Williams K.L."/>
            <person name="Hochstrasser D.F."/>
        </authorList>
    </citation>
    <scope>PROTEIN SEQUENCE OF 1-4</scope>
    <source>
        <strain>K12 / W3110 / ATCC 27325 / DSM 5911</strain>
    </source>
</reference>
<reference key="9">
    <citation type="journal article" date="1977" name="J. Biol. Chem.">
        <title>Amino acid sequence of Escherichia coli biotin carboxyl carrier protein (9100).</title>
        <authorList>
            <person name="Sutton M.R."/>
            <person name="Fall R.R."/>
            <person name="Nervi A.M."/>
            <person name="Alberts A.W."/>
            <person name="Vagelos P.R."/>
            <person name="Bradshaw R.A."/>
        </authorList>
    </citation>
    <scope>PROTEIN SEQUENCE OF 75-156</scope>
    <scope>BIOTINYLATION AT LYS-122</scope>
</reference>
<reference key="10">
    <citation type="journal article" date="1991" name="Proc. Natl. Acad. Sci. U.S.A.">
        <title>Acetyl-CoA carboxylase from Escherichia coli: gene organization and nucleotide sequence of the biotin carboxylase subunit.</title>
        <authorList>
            <person name="Kondo H."/>
            <person name="Shiratsuchi K."/>
            <person name="Yoshimoto T."/>
            <person name="Masuda T."/>
            <person name="Kitazono A."/>
            <person name="Tsuru D."/>
            <person name="Anai M."/>
            <person name="Sekiguchi M."/>
            <person name="Tanabe T."/>
        </authorList>
    </citation>
    <scope>NUCLEOTIDE SEQUENCE [GENOMIC DNA] OF 133-156</scope>
    <source>
        <strain>K12</strain>
    </source>
</reference>
<reference key="11">
    <citation type="journal article" date="1971" name="Proc. Natl. Acad. Sci. U.S.A.">
        <title>Acetyl CoA carboxylase: isolation and characterization of native biotin carboxyl carrier protein.</title>
        <authorList>
            <person name="Fall R.R."/>
            <person name="Nervi A.M."/>
            <person name="Alberts A.W."/>
            <person name="Vagelos P.R."/>
        </authorList>
    </citation>
    <scope>FUNCTION</scope>
    <scope>BIOTIN-BINDING</scope>
</reference>
<reference key="12">
    <citation type="journal article" date="1995" name="Structure">
        <title>Structure of the biotinyl domain of acetyl-coenzyme A carboxylase determined by MAD phasing.</title>
        <authorList>
            <person name="Athappilly F.K."/>
            <person name="Hendrickson W.A."/>
        </authorList>
    </citation>
    <scope>X-RAY CRYSTALLOGRAPHY (1.8 ANGSTROMS) OF 77-156</scope>
</reference>
<reference key="13">
    <citation type="journal article" date="1997" name="Biochemistry">
        <title>Structure of the carboxy-terminal fragment of the apo-biotin carboxyl carrier subunit of Escherichia coli acetyl-CoA carboxylase.</title>
        <authorList>
            <person name="Yao X."/>
            <person name="Wei D."/>
            <person name="Soden C. Jr."/>
            <person name="Summers M.F."/>
            <person name="Beckett D."/>
        </authorList>
    </citation>
    <scope>STRUCTURE BY NMR OF 70-156</scope>
</reference>
<reference key="14">
    <citation type="journal article" date="1999" name="Biochemistry">
        <title>Solution structures of apo and holo biotinyl domains from acetyl coenzyme A carboxylase of Escherichia coli determined by triple-resonance nuclear magnetic resonance spectroscopy.</title>
        <authorList>
            <person name="Roberts E.L."/>
            <person name="Shu N."/>
            <person name="Howard M.J."/>
            <person name="Broadhurst R.W."/>
            <person name="Chapman-Smith A."/>
            <person name="Wallace J.C."/>
            <person name="Morris T."/>
            <person name="Cronan J.E. Jr."/>
            <person name="Perham R.N."/>
        </authorList>
    </citation>
    <scope>STRUCTURE BY NMR OF 77-156</scope>
</reference>
<sequence>MDIRKIKKLIELVEESGISELEISEGEESVRISRAAPAASFPVMQQAYAAPMMQQPAQSNAAAPATVPSMEAPAAAEISGHIVRSPMVGTFYRTPSPDAKAFIEVGQKVNVGDTLCIVEAMKMMNQIEADKSGTVKAILVESGQPVEFDEPLVVIE</sequence>
<accession>P0ABD8</accession>
<accession>P02905</accession>
<accession>Q2M8W0</accession>
<keyword id="KW-0002">3D-structure</keyword>
<keyword id="KW-0092">Biotin</keyword>
<keyword id="KW-0903">Direct protein sequencing</keyword>
<keyword id="KW-0275">Fatty acid biosynthesis</keyword>
<keyword id="KW-0276">Fatty acid metabolism</keyword>
<keyword id="KW-0444">Lipid biosynthesis</keyword>
<keyword id="KW-0443">Lipid metabolism</keyword>
<keyword id="KW-1185">Reference proteome</keyword>
<proteinExistence type="evidence at protein level"/>
<evidence type="ECO:0000255" key="1">
    <source>
        <dbReference type="PROSITE-ProRule" id="PRU01066"/>
    </source>
</evidence>
<evidence type="ECO:0000269" key="2">
    <source>
    </source>
</evidence>
<evidence type="ECO:0000269" key="3">
    <source>
    </source>
</evidence>
<evidence type="ECO:0000303" key="4">
    <source>
    </source>
</evidence>
<evidence type="ECO:0000305" key="5"/>
<evidence type="ECO:0007829" key="6">
    <source>
        <dbReference type="PDB" id="1A6X"/>
    </source>
</evidence>
<evidence type="ECO:0007829" key="7">
    <source>
        <dbReference type="PDB" id="1BDO"/>
    </source>
</evidence>
<evidence type="ECO:0007829" key="8">
    <source>
        <dbReference type="PDB" id="3BDO"/>
    </source>
</evidence>
<evidence type="ECO:0007829" key="9">
    <source>
        <dbReference type="PDB" id="8UZ2"/>
    </source>
</evidence>
<feature type="chain" id="PRO_0000146805" description="Biotin carboxyl carrier protein of acetyl-CoA carboxylase">
    <location>
        <begin position="1"/>
        <end position="156"/>
    </location>
</feature>
<feature type="domain" description="Biotinyl-binding" evidence="1">
    <location>
        <begin position="73"/>
        <end position="156"/>
    </location>
</feature>
<feature type="modified residue" description="N6-biotinyllysine" evidence="1 2">
    <location>
        <position position="122"/>
    </location>
</feature>
<feature type="sequence conflict" description="In Ref. 2." evidence="5" ref="2">
    <original>D</original>
    <variation>N</variation>
    <location>
        <position position="113"/>
    </location>
</feature>
<feature type="strand" evidence="6">
    <location>
        <begin position="72"/>
        <end position="76"/>
    </location>
</feature>
<feature type="strand" evidence="7">
    <location>
        <begin position="80"/>
        <end position="84"/>
    </location>
</feature>
<feature type="strand" evidence="7">
    <location>
        <begin position="86"/>
        <end position="96"/>
    </location>
</feature>
<feature type="strand" evidence="9">
    <location>
        <begin position="105"/>
        <end position="109"/>
    </location>
</feature>
<feature type="strand" evidence="7">
    <location>
        <begin position="114"/>
        <end position="120"/>
    </location>
</feature>
<feature type="strand" evidence="7">
    <location>
        <begin position="123"/>
        <end position="128"/>
    </location>
</feature>
<feature type="strand" evidence="7">
    <location>
        <begin position="133"/>
        <end position="138"/>
    </location>
</feature>
<feature type="strand" evidence="8">
    <location>
        <begin position="142"/>
        <end position="145"/>
    </location>
</feature>
<feature type="strand" evidence="8">
    <location>
        <begin position="148"/>
        <end position="150"/>
    </location>
</feature>
<feature type="strand" evidence="7">
    <location>
        <begin position="151"/>
        <end position="155"/>
    </location>
</feature>